<feature type="chain" id="PRO_0000446111" description="CRISPR system single-strand-specific deoxyribonuclease Cas10/Csm1 (subtype III-A)">
    <location>
        <begin position="1"/>
        <end position="755"/>
    </location>
</feature>
<feature type="domain" description="GGDEF" evidence="3">
    <location>
        <begin position="522"/>
        <end position="656"/>
    </location>
</feature>
<feature type="region of interest" description="HD domain" evidence="6">
    <location>
        <begin position="1"/>
        <end position="87"/>
    </location>
</feature>
<feature type="mutagenesis site" description="Wild-type synthesis of the cA6 activator." evidence="4">
    <original>HD</original>
    <variation>AN</variation>
    <location>
        <begin position="14"/>
        <end position="15"/>
    </location>
</feature>
<feature type="mutagenesis site" description="No longer synthesizes the cA6 activator." evidence="4">
    <original>DD</original>
    <variation>AA</variation>
    <location>
        <begin position="584"/>
        <end position="585"/>
    </location>
</feature>
<comment type="function">
    <text evidence="4">CRISPR (clustered regularly interspaced short palindromic repeat) is an adaptive immune system that provides protection against mobile genetic elements (viruses, transposable elements and conjugative plasmids). CRISPR clusters contain spacers, sequences complementary to antecedent mobile elements, and target invading nucleic acids. CRISPR clusters are transcribed and processed into CRISPR RNA (crRNA). The type III-A Csm effector complex binds crRNA and acts as a crRNA-guided RNase, DNase and cyclic oligoadenylate synthase; binding of target RNA cognate to the crRNA is required for all activities. In a heterologous host the appropriately targeted Csm effector complex prevents growth of dsDNA phage phiNM1-gamma6.</text>
</comment>
<comment type="function">
    <text evidence="1">ssDNase activity is stimulated in the ternary Csm effector complex; binding of cognate target RNA activates the ssDNase, as the target RNA is degraded ssDNA activity decreases.</text>
</comment>
<comment type="function">
    <text evidence="2">This subunit is a single-strand-specific deoxyribonuclease (ssDNase) which digests both linear and circular ssDNA; it has both exo- and endonuclease activity.</text>
</comment>
<comment type="function">
    <text evidence="4">When associated with the ternary Csm effector complex (the crRNA, Cas proteins and a cognate target ssRNA) synthesizes cyclic oligoadenylates (cOA) from ATP, producing (mostly) cyclic hexaadenylate (cA6). cA6 synthesis occurs in the Csm effector complex and requires cognate target RNA and ATP; other NTPs are not incorporated. cOAs are second messengers that induce an antiviral state important for defense against invading nucleic acids.</text>
</comment>
<comment type="catalytic activity">
    <reaction evidence="4">
        <text>6 ATP = cyclic hexaadenylate + 6 diphosphate</text>
        <dbReference type="Rhea" id="RHEA:58276"/>
        <dbReference type="ChEBI" id="CHEBI:30616"/>
        <dbReference type="ChEBI" id="CHEBI:33019"/>
        <dbReference type="ChEBI" id="CHEBI:142456"/>
    </reaction>
</comment>
<comment type="cofactor">
    <cofactor evidence="4">
        <name>Mg(2+)</name>
        <dbReference type="ChEBI" id="CHEBI:18420"/>
    </cofactor>
    <text evidence="4">Synthesis of cA6 requires Mg(2+).</text>
</comment>
<comment type="activity regulation">
    <text evidence="4">Synthesis of cA6 is inhibited by EDTA.</text>
</comment>
<comment type="subunit">
    <text evidence="4">Part of the Csm effector complex that includes Cas10, Csm2, Csm3, Csm4 and Csm5.</text>
</comment>
<comment type="domain">
    <text evidence="4">The N-terminal HD domain has ssDNase activity. The C-terminal GGDEF domain has the cOA synthesis activity.</text>
</comment>
<comment type="miscellaneous">
    <text evidence="4">Encoded in a type III-A CRISPR locus.</text>
</comment>
<comment type="similarity">
    <text evidence="6">Belongs to the CRISPR-associated Cas10/Csm1 family.</text>
</comment>
<dbReference type="EC" id="3.1.-.-"/>
<dbReference type="EC" id="2.7.7.-" evidence="4"/>
<dbReference type="EMBL" id="AEPV01000074">
    <property type="protein sequence ID" value="EFU73217.1"/>
    <property type="molecule type" value="Genomic_DNA"/>
</dbReference>
<dbReference type="RefSeq" id="WP_007208958.1">
    <property type="nucleotide sequence ID" value="NZ_GL622241.1"/>
</dbReference>
<dbReference type="PDB" id="9G9A">
    <property type="method" value="EM"/>
    <property type="resolution" value="2.83 A"/>
    <property type="chains" value="A=2-755"/>
</dbReference>
<dbReference type="PDB" id="9G9B">
    <property type="method" value="EM"/>
    <property type="resolution" value="3.07 A"/>
    <property type="chains" value="A=2-755"/>
</dbReference>
<dbReference type="PDB" id="9G9C">
    <property type="method" value="EM"/>
    <property type="resolution" value="2.72 A"/>
    <property type="chains" value="A=2-755"/>
</dbReference>
<dbReference type="PDB" id="9G9D">
    <property type="method" value="EM"/>
    <property type="resolution" value="2.90 A"/>
    <property type="chains" value="A=2-755"/>
</dbReference>
<dbReference type="PDB" id="9G9E">
    <property type="method" value="EM"/>
    <property type="resolution" value="2.87 A"/>
    <property type="chains" value="A=2-755"/>
</dbReference>
<dbReference type="PDB" id="9G9F">
    <property type="method" value="EM"/>
    <property type="resolution" value="2.93 A"/>
    <property type="chains" value="A=2-755"/>
</dbReference>
<dbReference type="PDB" id="9G9G">
    <property type="method" value="EM"/>
    <property type="resolution" value="3.38 A"/>
    <property type="chains" value="A=2-755"/>
</dbReference>
<dbReference type="PDB" id="9G9H">
    <property type="method" value="EM"/>
    <property type="resolution" value="2.99 A"/>
    <property type="chains" value="A=2-755"/>
</dbReference>
<dbReference type="PDB" id="9G9I">
    <property type="method" value="EM"/>
    <property type="resolution" value="3.31 A"/>
    <property type="chains" value="A=2-755"/>
</dbReference>
<dbReference type="PDB" id="9G9J">
    <property type="method" value="EM"/>
    <property type="resolution" value="3.05 A"/>
    <property type="chains" value="A=2-755"/>
</dbReference>
<dbReference type="PDB" id="9G9K">
    <property type="method" value="EM"/>
    <property type="resolution" value="3.34 A"/>
    <property type="chains" value="A=2-755"/>
</dbReference>
<dbReference type="PDBsum" id="9G9A"/>
<dbReference type="PDBsum" id="9G9B"/>
<dbReference type="PDBsum" id="9G9C"/>
<dbReference type="PDBsum" id="9G9D"/>
<dbReference type="PDBsum" id="9G9E"/>
<dbReference type="PDBsum" id="9G9F"/>
<dbReference type="PDBsum" id="9G9G"/>
<dbReference type="PDBsum" id="9G9H"/>
<dbReference type="PDBsum" id="9G9I"/>
<dbReference type="PDBsum" id="9G9J"/>
<dbReference type="PDBsum" id="9G9K"/>
<dbReference type="EMDB" id="EMD-51145"/>
<dbReference type="EMDB" id="EMD-51146"/>
<dbReference type="EMDB" id="EMD-51147"/>
<dbReference type="EMDB" id="EMD-51148"/>
<dbReference type="EMDB" id="EMD-51149"/>
<dbReference type="EMDB" id="EMD-51150"/>
<dbReference type="EMDB" id="EMD-51151"/>
<dbReference type="EMDB" id="EMD-51152"/>
<dbReference type="EMDB" id="EMD-51153"/>
<dbReference type="EMDB" id="EMD-51154"/>
<dbReference type="EMDB" id="EMD-51155"/>
<dbReference type="SMR" id="E6LHV7"/>
<dbReference type="STRING" id="888064.HMPREF9088_1947"/>
<dbReference type="PATRIC" id="fig|888064.11.peg.2085"/>
<dbReference type="eggNOG" id="COG1353">
    <property type="taxonomic scope" value="Bacteria"/>
</dbReference>
<dbReference type="HOGENOM" id="CLU_017487_1_0_9"/>
<dbReference type="OrthoDB" id="9768769at2"/>
<dbReference type="Proteomes" id="UP000010296">
    <property type="component" value="Unassembled WGS sequence"/>
</dbReference>
<dbReference type="GO" id="GO:0005524">
    <property type="term" value="F:ATP binding"/>
    <property type="evidence" value="ECO:0007669"/>
    <property type="project" value="UniProtKB-KW"/>
</dbReference>
<dbReference type="GO" id="GO:0004519">
    <property type="term" value="F:endonuclease activity"/>
    <property type="evidence" value="ECO:0007669"/>
    <property type="project" value="UniProtKB-KW"/>
</dbReference>
<dbReference type="GO" id="GO:0004527">
    <property type="term" value="F:exonuclease activity"/>
    <property type="evidence" value="ECO:0007669"/>
    <property type="project" value="UniProtKB-KW"/>
</dbReference>
<dbReference type="GO" id="GO:0003723">
    <property type="term" value="F:RNA binding"/>
    <property type="evidence" value="ECO:0007669"/>
    <property type="project" value="UniProtKB-KW"/>
</dbReference>
<dbReference type="GO" id="GO:0016740">
    <property type="term" value="F:transferase activity"/>
    <property type="evidence" value="ECO:0007669"/>
    <property type="project" value="UniProtKB-KW"/>
</dbReference>
<dbReference type="GO" id="GO:0051607">
    <property type="term" value="P:defense response to virus"/>
    <property type="evidence" value="ECO:0007669"/>
    <property type="project" value="UniProtKB-KW"/>
</dbReference>
<dbReference type="CDD" id="cd09680">
    <property type="entry name" value="Cas10_III"/>
    <property type="match status" value="1"/>
</dbReference>
<dbReference type="Gene3D" id="3.30.70.270">
    <property type="match status" value="1"/>
</dbReference>
<dbReference type="Gene3D" id="1.10.3210.10">
    <property type="entry name" value="Hypothetical protein af1432"/>
    <property type="match status" value="1"/>
</dbReference>
<dbReference type="InterPro" id="IPR054767">
    <property type="entry name" value="Cas10-Cmr2_palm2"/>
</dbReference>
<dbReference type="InterPro" id="IPR013408">
    <property type="entry name" value="Cas10/Csm1"/>
</dbReference>
<dbReference type="InterPro" id="IPR052117">
    <property type="entry name" value="Cas10/Csm1_subtype-III-A"/>
</dbReference>
<dbReference type="InterPro" id="IPR048693">
    <property type="entry name" value="Cmr2-like_C"/>
</dbReference>
<dbReference type="InterPro" id="IPR041062">
    <property type="entry name" value="Csm1_B"/>
</dbReference>
<dbReference type="InterPro" id="IPR000160">
    <property type="entry name" value="GGDEF_dom"/>
</dbReference>
<dbReference type="InterPro" id="IPR043128">
    <property type="entry name" value="Rev_trsase/Diguanyl_cyclase"/>
</dbReference>
<dbReference type="NCBIfam" id="TIGR02578">
    <property type="entry name" value="cas_TM1811_Csm1"/>
    <property type="match status" value="1"/>
</dbReference>
<dbReference type="PANTHER" id="PTHR36528">
    <property type="entry name" value="CRISPR SYSTEM SINGLE-STRAND-SPECIFIC DEOXYRIBONUCLEASE CAS10/CSM1 (SUBTYPE III-A)"/>
    <property type="match status" value="1"/>
</dbReference>
<dbReference type="PANTHER" id="PTHR36528:SF1">
    <property type="entry name" value="CRISPR SYSTEM SINGLE-STRAND-SPECIFIC DEOXYRIBONUCLEASE CAS10_CSM1 (SUBTYPE III-A)"/>
    <property type="match status" value="1"/>
</dbReference>
<dbReference type="Pfam" id="PF22335">
    <property type="entry name" value="Cas10-Cmr2_palm2"/>
    <property type="match status" value="1"/>
</dbReference>
<dbReference type="Pfam" id="PF20824">
    <property type="entry name" value="Cmr2_hel_dom2"/>
    <property type="match status" value="1"/>
</dbReference>
<dbReference type="Pfam" id="PF18211">
    <property type="entry name" value="Csm1_B"/>
    <property type="match status" value="1"/>
</dbReference>
<dbReference type="SUPFAM" id="SSF109604">
    <property type="entry name" value="HD-domain/PDEase-like"/>
    <property type="match status" value="1"/>
</dbReference>
<dbReference type="PROSITE" id="PS50887">
    <property type="entry name" value="GGDEF"/>
    <property type="match status" value="1"/>
</dbReference>
<organism>
    <name type="scientific">Enterococcus italicus (strain DSM 15952 / CCUG 50447 / LMG 22039 / TP 1.5)</name>
    <dbReference type="NCBI Taxonomy" id="888064"/>
    <lineage>
        <taxon>Bacteria</taxon>
        <taxon>Bacillati</taxon>
        <taxon>Bacillota</taxon>
        <taxon>Bacilli</taxon>
        <taxon>Lactobacillales</taxon>
        <taxon>Enterococcaceae</taxon>
        <taxon>Enterococcus</taxon>
    </lineage>
</organism>
<keyword id="KW-0002">3D-structure</keyword>
<keyword id="KW-0051">Antiviral defense</keyword>
<keyword id="KW-0067">ATP-binding</keyword>
<keyword id="KW-0255">Endonuclease</keyword>
<keyword id="KW-0269">Exonuclease</keyword>
<keyword id="KW-0378">Hydrolase</keyword>
<keyword id="KW-0540">Nuclease</keyword>
<keyword id="KW-0547">Nucleotide-binding</keyword>
<keyword id="KW-1185">Reference proteome</keyword>
<keyword id="KW-0694">RNA-binding</keyword>
<keyword id="KW-0808">Transferase</keyword>
<gene>
    <name type="primary">cas10</name>
    <name type="synonym">csm1</name>
    <name type="ORF">HMPREF9088_1947</name>
</gene>
<evidence type="ECO:0000250" key="1">
    <source>
        <dbReference type="UniProtKB" id="A0A0A7HFE1"/>
    </source>
</evidence>
<evidence type="ECO:0000250" key="2">
    <source>
        <dbReference type="UniProtKB" id="B6YWB8"/>
    </source>
</evidence>
<evidence type="ECO:0000255" key="3">
    <source>
        <dbReference type="PROSITE-ProRule" id="PRU00095"/>
    </source>
</evidence>
<evidence type="ECO:0000269" key="4">
    <source>
    </source>
</evidence>
<evidence type="ECO:0000303" key="5">
    <source>
    </source>
</evidence>
<evidence type="ECO:0000305" key="6"/>
<proteinExistence type="evidence at protein level"/>
<accession>E6LHV7</accession>
<protein>
    <recommendedName>
        <fullName>CRISPR system single-strand-specific deoxyribonuclease Cas10/Csm1 (subtype III-A)</fullName>
        <shortName>ssDNase Cas10</shortName>
        <ecNumber>3.1.-.-</ecNumber>
    </recommendedName>
    <alternativeName>
        <fullName evidence="5">Cyclic oligoadenylate synthase</fullName>
        <ecNumber evidence="4">2.7.7.-</ecNumber>
    </alternativeName>
    <alternativeName>
        <fullName evidence="5">EiCas10</fullName>
    </alternativeName>
</protein>
<sequence>MNKKLELMYGSLLHDIGKIVYRSNSVDFAKGTHSKIGSQFLNKFKPFQLSGIVDSVSYHHYKELASSSLLDDSVAYITYIADNIASGTDRRASEGDYEGEGNRQRFDKRAPLASIFNVVNSETKGLANYTYSFEKEQVYRYPTDAKKEYTSSQYAALVNKMTDDLSNKLKVGPDSFSSLLQWTESLWSYIPSSTDTNQVMDVSLYDHSKITCAIASCIYDYLTEMNCVNYRKELFSPYEKTKQFYQEDVFLLVSLDMSGIQDFIYNISGSKALKSLRSRSFYLETMLESLVDDLLSDLELSRANLLYTGGGHAYLLLPNTERARDVLASFEGEMKEWFIKIFKTDLSVAIAYKACTGEDLMNSNGTYSDLWQTVSRKLSDKKAHKYSLNEIKLFNSTIHAGTQECKECLRSDIDISEDSLCKICEGIIAISNDLRDYSFFVVSPEGKVPLPRNRYLSVENQDGAERKIKMNKETRIYSKNQPFVGKQLVTNLWMCDYDFSTLNPETKKQGIASYVNREVGIPRLGVLRADIDNLGTTFIKGIPEQYRSISRTATLSRQLSMFFKFELSNILKGARISVIYSGGDDLFLIGAWDDVISKALVLRKAFTRFSAGKLTFSAGIGMYPVKYPISKMASETGVLEDLAKRGEKNQVALWNDSKVFGWSQLEEQILKEKMIPLQEALTNSQEHGKSFLYKMLELLRNEDQINIARLAYLLARSSLSEELTQSIFAWSQNKQQKVELITAIEYLVYQIREAD</sequence>
<reference key="1">
    <citation type="submission" date="2010-12" db="EMBL/GenBank/DDBJ databases">
        <authorList>
            <person name="Muzny D."/>
            <person name="Qin X."/>
            <person name="Deng J."/>
            <person name="Jiang H."/>
            <person name="Liu Y."/>
            <person name="Qu J."/>
            <person name="Song X.-Z."/>
            <person name="Zhang L."/>
            <person name="Thornton R."/>
            <person name="Coyle M."/>
            <person name="Francisco L."/>
            <person name="Jackson L."/>
            <person name="Javaid M."/>
            <person name="Korchina V."/>
            <person name="Kovar C."/>
            <person name="Mata R."/>
            <person name="Mathew T."/>
            <person name="Ngo R."/>
            <person name="Nguyen L."/>
            <person name="Nguyen N."/>
            <person name="Okwuonu G."/>
            <person name="Ongeri F."/>
            <person name="Pham C."/>
            <person name="Simmons D."/>
            <person name="Wilczek-Boney K."/>
            <person name="Hale W."/>
            <person name="Jakkamsetti A."/>
            <person name="Pham P."/>
            <person name="Ruth R."/>
            <person name="San Lucas F."/>
            <person name="Warren J."/>
            <person name="Zhang J."/>
            <person name="Zhao Z."/>
            <person name="Zhou C."/>
            <person name="Zhu D."/>
            <person name="Lee S."/>
            <person name="Bess C."/>
            <person name="Blankenburg K."/>
            <person name="Forbes L."/>
            <person name="Fu Q."/>
            <person name="Gubbala S."/>
            <person name="Hirani K."/>
            <person name="Jayaseelan J.C."/>
            <person name="Lara F."/>
            <person name="Munidasa M."/>
            <person name="Palculict T."/>
            <person name="Patil S."/>
            <person name="Pu L.-L."/>
            <person name="Saada N."/>
            <person name="Tang L."/>
            <person name="Weissenberger G."/>
            <person name="Zhu Y."/>
            <person name="Hemphill L."/>
            <person name="Shang Y."/>
            <person name="Youmans B."/>
            <person name="Ayvaz T."/>
            <person name="Ross M."/>
            <person name="Santibanez J."/>
            <person name="Aqrawi P."/>
            <person name="Gross S."/>
            <person name="Joshi V."/>
            <person name="Fowler G."/>
            <person name="Nazareth L."/>
            <person name="Reid J."/>
            <person name="Worley K."/>
            <person name="Petrosino J."/>
            <person name="Highlander S."/>
            <person name="Gibbs R."/>
        </authorList>
    </citation>
    <scope>NUCLEOTIDE SEQUENCE [LARGE SCALE GENOMIC DNA]</scope>
    <source>
        <strain>DSM 15952 / CCUG 50447 / LMG 22039 / TP 1.5</strain>
    </source>
</reference>
<reference key="2">
    <citation type="journal article" date="2017" name="Nature">
        <title>Type III CRISPR-Cas systems produce cyclic oligoadenylate second messengers.</title>
        <authorList>
            <person name="Niewoehner O."/>
            <person name="Garcia-Doval C."/>
            <person name="Rostoel J.T."/>
            <person name="Berk C."/>
            <person name="Schwede F."/>
            <person name="Bigler L."/>
            <person name="Hall J."/>
            <person name="Marraffini L.A."/>
            <person name="Jinek M."/>
        </authorList>
    </citation>
    <scope>FUNCTION IN PHAGE RESISTANCE</scope>
    <scope>FUNCTION IN COA FORMATION</scope>
    <scope>COFACTOR</scope>
    <scope>ACTIVITY REGULATION</scope>
    <scope>SUBUNIT</scope>
    <scope>MUTAGENESIS OF 14-HIS-ASP-15 AND 584-ASP-ASP-585</scope>
    <source>
        <strain>DSM 15952 / CCUG 50447 / LMG 22039 / TP 1.5</strain>
    </source>
</reference>
<name>CAS10_ENTI1</name>